<sequence length="349" mass="38974">MDLRLYTIFVGFFSVVYAQRTPTISYISQEQIKDIGGTVELECSVQYAQDYPVLWMKVDRNRQVDPLPISTGSSLIIRDSRFALRYDTASSTYTLQIKDIQETDAGFYQCQVIIGLNNKITAEVDLQVRRPPVISDNSTRSLVVSEGQAVRLECYAGGYPAPRVSWRRENNAILPTGGSIYRGNVLKISRIGKEDRGTYYCVAENGVGKGARRNIAVEVEFPPVITVPRPRLGQALQYDMDLECHVEAYPPPAITWLKDETVLSNNQHYSISHFATADEFTDTTRVITIEKRQYGKYQCKAANKLGEAREEVELFETIIPVCPPACGQAYGGDAAEISTSMALILISTI</sequence>
<feature type="signal peptide" evidence="1">
    <location>
        <begin position="1"/>
        <end position="18"/>
    </location>
</feature>
<feature type="chain" id="PRO_0000014812" description="Lachesin">
    <location>
        <begin position="19"/>
        <end position="332"/>
    </location>
</feature>
<feature type="propeptide" id="PRO_0000014813" description="Removed in mature form" evidence="1">
    <location>
        <begin position="333"/>
        <end position="349"/>
    </location>
</feature>
<feature type="domain" description="Ig-like V-type">
    <location>
        <begin position="22"/>
        <end position="127"/>
    </location>
</feature>
<feature type="domain" description="Ig-like C2-type 1">
    <location>
        <begin position="132"/>
        <end position="218"/>
    </location>
</feature>
<feature type="domain" description="Ig-like C2-type 2">
    <location>
        <begin position="222"/>
        <end position="315"/>
    </location>
</feature>
<feature type="lipid moiety-binding region" description="GPI-anchor amidated glycine" evidence="1">
    <location>
        <position position="332"/>
    </location>
</feature>
<feature type="glycosylation site" description="N-linked (GlcNAc...) asparagine" evidence="1">
    <location>
        <position position="137"/>
    </location>
</feature>
<feature type="disulfide bond" evidence="2">
    <location>
        <begin position="43"/>
        <end position="110"/>
    </location>
</feature>
<feature type="disulfide bond" evidence="2">
    <location>
        <begin position="154"/>
        <end position="201"/>
    </location>
</feature>
<feature type="disulfide bond" evidence="2">
    <location>
        <begin position="244"/>
        <end position="299"/>
    </location>
</feature>
<organism>
    <name type="scientific">Schistocerca americana</name>
    <name type="common">American grasshopper</name>
    <dbReference type="NCBI Taxonomy" id="7009"/>
    <lineage>
        <taxon>Eukaryota</taxon>
        <taxon>Metazoa</taxon>
        <taxon>Ecdysozoa</taxon>
        <taxon>Arthropoda</taxon>
        <taxon>Hexapoda</taxon>
        <taxon>Insecta</taxon>
        <taxon>Pterygota</taxon>
        <taxon>Neoptera</taxon>
        <taxon>Polyneoptera</taxon>
        <taxon>Orthoptera</taxon>
        <taxon>Caelifera</taxon>
        <taxon>Acrididea</taxon>
        <taxon>Acridomorpha</taxon>
        <taxon>Acridoidea</taxon>
        <taxon>Acrididae</taxon>
        <taxon>Cyrtacanthacridinae</taxon>
        <taxon>Schistocerca</taxon>
    </lineage>
</organism>
<gene>
    <name type="primary">LAC</name>
</gene>
<reference key="1">
    <citation type="journal article" date="1993" name="Development">
        <title>Lachesin: an immunoglobulin superfamily protein whose expression correlates with neurogenesis in grasshopper embryos.</title>
        <authorList>
            <person name="Karlstrom R.O."/>
            <person name="Wilder L.P."/>
            <person name="Bastiani M.J."/>
        </authorList>
    </citation>
    <scope>NUCLEOTIDE SEQUENCE [MRNA]</scope>
    <scope>PARTIAL PROTEIN SEQUENCE</scope>
</reference>
<accession>Q26474</accession>
<evidence type="ECO:0000255" key="1"/>
<evidence type="ECO:0000255" key="2">
    <source>
        <dbReference type="PROSITE-ProRule" id="PRU00114"/>
    </source>
</evidence>
<dbReference type="EMBL" id="L13256">
    <property type="protein sequence ID" value="AAC37185.1"/>
    <property type="molecule type" value="mRNA"/>
</dbReference>
<dbReference type="SMR" id="Q26474"/>
<dbReference type="GlyCosmos" id="Q26474">
    <property type="glycosylation" value="1 site, No reported glycans"/>
</dbReference>
<dbReference type="OrthoDB" id="6512881at2759"/>
<dbReference type="GO" id="GO:0043005">
    <property type="term" value="C:neuron projection"/>
    <property type="evidence" value="ECO:0007669"/>
    <property type="project" value="TreeGrafter"/>
</dbReference>
<dbReference type="GO" id="GO:0005886">
    <property type="term" value="C:plasma membrane"/>
    <property type="evidence" value="ECO:0007669"/>
    <property type="project" value="UniProtKB-SubCell"/>
</dbReference>
<dbReference type="GO" id="GO:0098552">
    <property type="term" value="C:side of membrane"/>
    <property type="evidence" value="ECO:0007669"/>
    <property type="project" value="UniProtKB-KW"/>
</dbReference>
<dbReference type="GO" id="GO:0007155">
    <property type="term" value="P:cell adhesion"/>
    <property type="evidence" value="ECO:0007669"/>
    <property type="project" value="UniProtKB-KW"/>
</dbReference>
<dbReference type="CDD" id="cd00096">
    <property type="entry name" value="Ig"/>
    <property type="match status" value="1"/>
</dbReference>
<dbReference type="FunFam" id="2.60.40.10:FF:000328">
    <property type="entry name" value="CLUMA_CG000981, isoform A"/>
    <property type="match status" value="1"/>
</dbReference>
<dbReference type="Gene3D" id="2.60.40.10">
    <property type="entry name" value="Immunoglobulins"/>
    <property type="match status" value="3"/>
</dbReference>
<dbReference type="InterPro" id="IPR007110">
    <property type="entry name" value="Ig-like_dom"/>
</dbReference>
<dbReference type="InterPro" id="IPR036179">
    <property type="entry name" value="Ig-like_dom_sf"/>
</dbReference>
<dbReference type="InterPro" id="IPR013783">
    <property type="entry name" value="Ig-like_fold"/>
</dbReference>
<dbReference type="InterPro" id="IPR013098">
    <property type="entry name" value="Ig_I-set"/>
</dbReference>
<dbReference type="InterPro" id="IPR003599">
    <property type="entry name" value="Ig_sub"/>
</dbReference>
<dbReference type="InterPro" id="IPR003598">
    <property type="entry name" value="Ig_sub2"/>
</dbReference>
<dbReference type="InterPro" id="IPR013106">
    <property type="entry name" value="Ig_V-set"/>
</dbReference>
<dbReference type="InterPro" id="IPR051170">
    <property type="entry name" value="Neural/epithelial_adhesion"/>
</dbReference>
<dbReference type="PANTHER" id="PTHR12231">
    <property type="entry name" value="CTX-RELATED TYPE I TRANSMEMBRANE PROTEIN"/>
    <property type="match status" value="1"/>
</dbReference>
<dbReference type="PANTHER" id="PTHR12231:SF220">
    <property type="entry name" value="LACHESIN"/>
    <property type="match status" value="1"/>
</dbReference>
<dbReference type="Pfam" id="PF07679">
    <property type="entry name" value="I-set"/>
    <property type="match status" value="1"/>
</dbReference>
<dbReference type="Pfam" id="PF13927">
    <property type="entry name" value="Ig_3"/>
    <property type="match status" value="1"/>
</dbReference>
<dbReference type="Pfam" id="PF07686">
    <property type="entry name" value="V-set"/>
    <property type="match status" value="1"/>
</dbReference>
<dbReference type="PIRSF" id="PIRSF000615">
    <property type="entry name" value="TyrPK_CSF1-R"/>
    <property type="match status" value="1"/>
</dbReference>
<dbReference type="SMART" id="SM00409">
    <property type="entry name" value="IG"/>
    <property type="match status" value="3"/>
</dbReference>
<dbReference type="SMART" id="SM00408">
    <property type="entry name" value="IGc2"/>
    <property type="match status" value="3"/>
</dbReference>
<dbReference type="SUPFAM" id="SSF48726">
    <property type="entry name" value="Immunoglobulin"/>
    <property type="match status" value="3"/>
</dbReference>
<dbReference type="PROSITE" id="PS50835">
    <property type="entry name" value="IG_LIKE"/>
    <property type="match status" value="3"/>
</dbReference>
<proteinExistence type="evidence at protein level"/>
<comment type="function">
    <text>May play a role in early neuronal differentiation and axon outgrowth.</text>
</comment>
<comment type="subcellular location">
    <subcellularLocation>
        <location>Cell membrane</location>
        <topology>Lipid-anchor</topology>
        <topology>GPI-anchor</topology>
    </subcellularLocation>
</comment>
<comment type="tissue specificity">
    <text>Expressed by all neurogenic cells early, but only those cells that become neuroblasts continue to express it. Expressed by neuroblasts, ganglion mother cells and neurons early in their lives, but expression becomes restricted to a subset of neurons as development progresses. Expressed by sensory neurons as they delaminate from the body wall ectoderm. It is also present on growing axons of the CNS and PNS and becomes restricted to a subset of axons later in development.</text>
</comment>
<comment type="developmental stage">
    <text>Expressed on differentiating neuronal cells from the onset of neurogenesis in both the central and peripheral nervous systems.</text>
</comment>
<comment type="PTM">
    <text>The N-terminus is blocked.</text>
</comment>
<protein>
    <recommendedName>
        <fullName>Lachesin</fullName>
    </recommendedName>
</protein>
<keyword id="KW-0130">Cell adhesion</keyword>
<keyword id="KW-1003">Cell membrane</keyword>
<keyword id="KW-0903">Direct protein sequencing</keyword>
<keyword id="KW-1015">Disulfide bond</keyword>
<keyword id="KW-0325">Glycoprotein</keyword>
<keyword id="KW-0336">GPI-anchor</keyword>
<keyword id="KW-0393">Immunoglobulin domain</keyword>
<keyword id="KW-0449">Lipoprotein</keyword>
<keyword id="KW-0472">Membrane</keyword>
<keyword id="KW-0677">Repeat</keyword>
<keyword id="KW-0732">Signal</keyword>
<name>LACH_SCHAM</name>